<sequence>MKYKDLRDFIAMLEQQGKLKRVAHPVSPHLEMTEIADRVLRAEGPALLFENPVKPDGTRYDYPVLANLFGTPERVAMGMGADSVSKLREIGQTLAYLKEPEPPKGIKDAFSKLPLLKDIWSMAPNVVKNAPCQEIVWEGEDVDLYQLPIQHCWPEDVAPLVTWGLTVTRGPHKKRQNLGIYRQQLIGKNKLVMRWLSHRGGALDYQEFRKLNPDTPYPVAVVLGCDPSTILGAVTPVPDTLSEYQFAGLLRGSRTELVKCIGSDLQVPARAEIVLEGVIHPNETALEGPYGDHTGYYNEQGHFPVFTVERITMRENPIYHSTYTGKPPDEPAVLGVALNEVFVPLLQKQFSEITDFYLPPEGCSYRMAVVSMKKQYAGHAKRVMTGCWSFLRQFMYTKFIIVVDDDVNVRDWKEVIWAVTTRMDPVRDTVLVENTPIDYLDFASPVSGLGGKMGLDATSKWPGETDREWGRVIKKDPAVTVKIDGIWGKLGL</sequence>
<feature type="chain" id="PRO_1000186717" description="3-octaprenyl-4-hydroxybenzoate carboxy-lyase">
    <location>
        <begin position="1"/>
        <end position="492"/>
    </location>
</feature>
<feature type="active site" description="Proton donor" evidence="1">
    <location>
        <position position="292"/>
    </location>
</feature>
<feature type="binding site" evidence="1">
    <location>
        <position position="177"/>
    </location>
    <ligand>
        <name>Mn(2+)</name>
        <dbReference type="ChEBI" id="CHEBI:29035"/>
    </ligand>
</feature>
<feature type="binding site" evidence="1">
    <location>
        <begin position="180"/>
        <end position="182"/>
    </location>
    <ligand>
        <name>prenylated FMN</name>
        <dbReference type="ChEBI" id="CHEBI:87746"/>
    </ligand>
</feature>
<feature type="binding site" evidence="1">
    <location>
        <begin position="194"/>
        <end position="196"/>
    </location>
    <ligand>
        <name>prenylated FMN</name>
        <dbReference type="ChEBI" id="CHEBI:87746"/>
    </ligand>
</feature>
<feature type="binding site" evidence="1">
    <location>
        <begin position="199"/>
        <end position="200"/>
    </location>
    <ligand>
        <name>prenylated FMN</name>
        <dbReference type="ChEBI" id="CHEBI:87746"/>
    </ligand>
</feature>
<feature type="binding site" evidence="1">
    <location>
        <position position="243"/>
    </location>
    <ligand>
        <name>Mn(2+)</name>
        <dbReference type="ChEBI" id="CHEBI:29035"/>
    </ligand>
</feature>
<evidence type="ECO:0000255" key="1">
    <source>
        <dbReference type="HAMAP-Rule" id="MF_01636"/>
    </source>
</evidence>
<name>UBID_NEIG2</name>
<comment type="function">
    <text evidence="1">Catalyzes the decarboxylation of 3-octaprenyl-4-hydroxy benzoate to 2-octaprenylphenol, an intermediate step in ubiquinone biosynthesis.</text>
</comment>
<comment type="catalytic activity">
    <reaction evidence="1">
        <text>a 4-hydroxy-3-(all-trans-polyprenyl)benzoate + H(+) = a 2-(all-trans-polyprenyl)phenol + CO2</text>
        <dbReference type="Rhea" id="RHEA:41680"/>
        <dbReference type="Rhea" id="RHEA-COMP:9514"/>
        <dbReference type="Rhea" id="RHEA-COMP:9516"/>
        <dbReference type="ChEBI" id="CHEBI:1269"/>
        <dbReference type="ChEBI" id="CHEBI:15378"/>
        <dbReference type="ChEBI" id="CHEBI:16526"/>
        <dbReference type="ChEBI" id="CHEBI:78396"/>
        <dbReference type="EC" id="4.1.1.98"/>
    </reaction>
</comment>
<comment type="cofactor">
    <cofactor evidence="1">
        <name>prenylated FMN</name>
        <dbReference type="ChEBI" id="CHEBI:87746"/>
    </cofactor>
    <text evidence="1">Binds 1 prenylated FMN per subunit.</text>
</comment>
<comment type="cofactor">
    <cofactor evidence="1">
        <name>Mn(2+)</name>
        <dbReference type="ChEBI" id="CHEBI:29035"/>
    </cofactor>
</comment>
<comment type="pathway">
    <text evidence="1">Cofactor biosynthesis; ubiquinone biosynthesis.</text>
</comment>
<comment type="subunit">
    <text evidence="1">Homohexamer.</text>
</comment>
<comment type="subcellular location">
    <subcellularLocation>
        <location evidence="1">Cell membrane</location>
        <topology evidence="1">Peripheral membrane protein</topology>
    </subcellularLocation>
</comment>
<comment type="similarity">
    <text evidence="1">Belongs to the UbiD family.</text>
</comment>
<dbReference type="EC" id="4.1.1.98" evidence="1"/>
<dbReference type="EMBL" id="CP001050">
    <property type="protein sequence ID" value="ACF30227.1"/>
    <property type="molecule type" value="Genomic_DNA"/>
</dbReference>
<dbReference type="RefSeq" id="WP_003691687.1">
    <property type="nucleotide sequence ID" value="NC_011035.1"/>
</dbReference>
<dbReference type="SMR" id="B4RN63"/>
<dbReference type="KEGG" id="ngk:NGK_1573"/>
<dbReference type="HOGENOM" id="CLU_023348_4_1_4"/>
<dbReference type="UniPathway" id="UPA00232"/>
<dbReference type="Proteomes" id="UP000002564">
    <property type="component" value="Chromosome"/>
</dbReference>
<dbReference type="GO" id="GO:0005829">
    <property type="term" value="C:cytosol"/>
    <property type="evidence" value="ECO:0007669"/>
    <property type="project" value="TreeGrafter"/>
</dbReference>
<dbReference type="GO" id="GO:0005886">
    <property type="term" value="C:plasma membrane"/>
    <property type="evidence" value="ECO:0007669"/>
    <property type="project" value="UniProtKB-SubCell"/>
</dbReference>
<dbReference type="GO" id="GO:0008694">
    <property type="term" value="F:3-octaprenyl-4-hydroxybenzoate carboxy-lyase activity"/>
    <property type="evidence" value="ECO:0007669"/>
    <property type="project" value="UniProtKB-UniRule"/>
</dbReference>
<dbReference type="GO" id="GO:0046872">
    <property type="term" value="F:metal ion binding"/>
    <property type="evidence" value="ECO:0007669"/>
    <property type="project" value="UniProtKB-KW"/>
</dbReference>
<dbReference type="GO" id="GO:0006744">
    <property type="term" value="P:ubiquinone biosynthetic process"/>
    <property type="evidence" value="ECO:0007669"/>
    <property type="project" value="UniProtKB-UniRule"/>
</dbReference>
<dbReference type="FunFam" id="1.20.5.570:FF:000001">
    <property type="entry name" value="3-octaprenyl-4-hydroxybenzoate carboxy-lyase"/>
    <property type="match status" value="1"/>
</dbReference>
<dbReference type="FunFam" id="3.40.1670.10:FF:000001">
    <property type="entry name" value="3-octaprenyl-4-hydroxybenzoate carboxy-lyase"/>
    <property type="match status" value="1"/>
</dbReference>
<dbReference type="Gene3D" id="1.20.5.570">
    <property type="entry name" value="Single helix bin"/>
    <property type="match status" value="1"/>
</dbReference>
<dbReference type="Gene3D" id="3.40.1670.10">
    <property type="entry name" value="UbiD C-terminal domain-like"/>
    <property type="match status" value="1"/>
</dbReference>
<dbReference type="HAMAP" id="MF_01636">
    <property type="entry name" value="UbiD"/>
    <property type="match status" value="1"/>
</dbReference>
<dbReference type="InterPro" id="IPR002830">
    <property type="entry name" value="UbiD"/>
</dbReference>
<dbReference type="InterPro" id="IPR049381">
    <property type="entry name" value="UbiD-like_C"/>
</dbReference>
<dbReference type="InterPro" id="IPR049383">
    <property type="entry name" value="UbiD-like_N"/>
</dbReference>
<dbReference type="InterPro" id="IPR023677">
    <property type="entry name" value="UbiD_bacteria"/>
</dbReference>
<dbReference type="InterPro" id="IPR048304">
    <property type="entry name" value="UbiD_Rift_dom"/>
</dbReference>
<dbReference type="NCBIfam" id="NF008175">
    <property type="entry name" value="PRK10922.1"/>
    <property type="match status" value="1"/>
</dbReference>
<dbReference type="NCBIfam" id="TIGR00148">
    <property type="entry name" value="UbiD family decarboxylase"/>
    <property type="match status" value="1"/>
</dbReference>
<dbReference type="PANTHER" id="PTHR30108">
    <property type="entry name" value="3-OCTAPRENYL-4-HYDROXYBENZOATE CARBOXY-LYASE-RELATED"/>
    <property type="match status" value="1"/>
</dbReference>
<dbReference type="PANTHER" id="PTHR30108:SF17">
    <property type="entry name" value="FERULIC ACID DECARBOXYLASE 1"/>
    <property type="match status" value="1"/>
</dbReference>
<dbReference type="Pfam" id="PF01977">
    <property type="entry name" value="UbiD"/>
    <property type="match status" value="1"/>
</dbReference>
<dbReference type="Pfam" id="PF20696">
    <property type="entry name" value="UbiD_C"/>
    <property type="match status" value="1"/>
</dbReference>
<dbReference type="Pfam" id="PF20695">
    <property type="entry name" value="UbiD_N"/>
    <property type="match status" value="1"/>
</dbReference>
<dbReference type="SUPFAM" id="SSF50475">
    <property type="entry name" value="FMN-binding split barrel"/>
    <property type="match status" value="1"/>
</dbReference>
<dbReference type="SUPFAM" id="SSF143968">
    <property type="entry name" value="UbiD C-terminal domain-like"/>
    <property type="match status" value="1"/>
</dbReference>
<reference key="1">
    <citation type="journal article" date="2008" name="J. Bacteriol.">
        <title>Complete genome sequence of Neisseria gonorrhoeae NCCP11945.</title>
        <authorList>
            <person name="Chung G.T."/>
            <person name="Yoo J.S."/>
            <person name="Oh H.B."/>
            <person name="Lee Y.S."/>
            <person name="Cha S.H."/>
            <person name="Kim S.J."/>
            <person name="Yoo C.K."/>
        </authorList>
    </citation>
    <scope>NUCLEOTIDE SEQUENCE [LARGE SCALE GENOMIC DNA]</scope>
    <source>
        <strain>NCCP11945</strain>
    </source>
</reference>
<organism>
    <name type="scientific">Neisseria gonorrhoeae (strain NCCP11945)</name>
    <dbReference type="NCBI Taxonomy" id="521006"/>
    <lineage>
        <taxon>Bacteria</taxon>
        <taxon>Pseudomonadati</taxon>
        <taxon>Pseudomonadota</taxon>
        <taxon>Betaproteobacteria</taxon>
        <taxon>Neisseriales</taxon>
        <taxon>Neisseriaceae</taxon>
        <taxon>Neisseria</taxon>
    </lineage>
</organism>
<proteinExistence type="inferred from homology"/>
<keyword id="KW-1003">Cell membrane</keyword>
<keyword id="KW-0210">Decarboxylase</keyword>
<keyword id="KW-0285">Flavoprotein</keyword>
<keyword id="KW-0288">FMN</keyword>
<keyword id="KW-0456">Lyase</keyword>
<keyword id="KW-0464">Manganese</keyword>
<keyword id="KW-0472">Membrane</keyword>
<keyword id="KW-0479">Metal-binding</keyword>
<keyword id="KW-0831">Ubiquinone biosynthesis</keyword>
<gene>
    <name evidence="1" type="primary">ubiD</name>
    <name type="ordered locus">NGK_1573</name>
</gene>
<protein>
    <recommendedName>
        <fullName evidence="1">3-octaprenyl-4-hydroxybenzoate carboxy-lyase</fullName>
        <ecNumber evidence="1">4.1.1.98</ecNumber>
    </recommendedName>
    <alternativeName>
        <fullName evidence="1">Polyprenyl p-hydroxybenzoate decarboxylase</fullName>
    </alternativeName>
</protein>
<accession>B4RN63</accession>